<keyword id="KW-0028">Amino-acid biosynthesis</keyword>
<keyword id="KW-0057">Aromatic amino acid biosynthesis</keyword>
<keyword id="KW-0520">NAD</keyword>
<keyword id="KW-0560">Oxidoreductase</keyword>
<keyword id="KW-1185">Reference proteome</keyword>
<reference key="1">
    <citation type="journal article" date="2006" name="BMC Genomics">
        <title>The genome of the square archaeon Haloquadratum walsbyi: life at the limits of water activity.</title>
        <authorList>
            <person name="Bolhuis H."/>
            <person name="Palm P."/>
            <person name="Wende A."/>
            <person name="Falb M."/>
            <person name="Rampp M."/>
            <person name="Rodriguez-Valera F."/>
            <person name="Pfeiffer F."/>
            <person name="Oesterhelt D."/>
        </authorList>
    </citation>
    <scope>NUCLEOTIDE SEQUENCE [LARGE SCALE GENOMIC DNA]</scope>
    <source>
        <strain>DSM 16790 / HBSQ001</strain>
    </source>
</reference>
<protein>
    <recommendedName>
        <fullName evidence="1">3-dehydroquinate synthase</fullName>
        <shortName evidence="1">DHQ synthase</shortName>
        <ecNumber evidence="1">1.4.1.24</ecNumber>
    </recommendedName>
    <alternativeName>
        <fullName evidence="1">3-dehydroquinate synthase II</fullName>
    </alternativeName>
</protein>
<gene>
    <name evidence="1" type="primary">aroB'</name>
    <name type="ordered locus">HQ_1155A</name>
</gene>
<feature type="chain" id="PRO_0000372045" description="3-dehydroquinate synthase">
    <location>
        <begin position="1"/>
        <end position="399"/>
    </location>
</feature>
<evidence type="ECO:0000255" key="1">
    <source>
        <dbReference type="HAMAP-Rule" id="MF_01244"/>
    </source>
</evidence>
<dbReference type="EC" id="1.4.1.24" evidence="1"/>
<dbReference type="EMBL" id="AM180088">
    <property type="protein sequence ID" value="CAJ51285.1"/>
    <property type="molecule type" value="Genomic_DNA"/>
</dbReference>
<dbReference type="RefSeq" id="WP_011570450.1">
    <property type="nucleotide sequence ID" value="NC_008212.1"/>
</dbReference>
<dbReference type="STRING" id="362976.HQ_1155A"/>
<dbReference type="GeneID" id="4193719"/>
<dbReference type="KEGG" id="hwa:HQ_1155A"/>
<dbReference type="eggNOG" id="arCOG04353">
    <property type="taxonomic scope" value="Archaea"/>
</dbReference>
<dbReference type="HOGENOM" id="CLU_056379_0_0_2"/>
<dbReference type="Proteomes" id="UP000001975">
    <property type="component" value="Chromosome"/>
</dbReference>
<dbReference type="GO" id="GO:0003856">
    <property type="term" value="F:3-dehydroquinate synthase activity"/>
    <property type="evidence" value="ECO:0007669"/>
    <property type="project" value="InterPro"/>
</dbReference>
<dbReference type="GO" id="GO:0102042">
    <property type="term" value="F:dehydroquinate synthase activity"/>
    <property type="evidence" value="ECO:0007669"/>
    <property type="project" value="UniProtKB-EC"/>
</dbReference>
<dbReference type="GO" id="GO:0051287">
    <property type="term" value="F:NAD binding"/>
    <property type="evidence" value="ECO:0007669"/>
    <property type="project" value="UniProtKB-UniRule"/>
</dbReference>
<dbReference type="GO" id="GO:0008652">
    <property type="term" value="P:amino acid biosynthetic process"/>
    <property type="evidence" value="ECO:0007669"/>
    <property type="project" value="UniProtKB-KW"/>
</dbReference>
<dbReference type="GO" id="GO:0009073">
    <property type="term" value="P:aromatic amino acid family biosynthetic process"/>
    <property type="evidence" value="ECO:0007669"/>
    <property type="project" value="UniProtKB-UniRule"/>
</dbReference>
<dbReference type="HAMAP" id="MF_01244">
    <property type="entry name" value="Arch_DHQ_synthase"/>
    <property type="match status" value="1"/>
</dbReference>
<dbReference type="InterPro" id="IPR002812">
    <property type="entry name" value="DHQ_synth"/>
</dbReference>
<dbReference type="NCBIfam" id="NF002623">
    <property type="entry name" value="PRK02290.1-1"/>
    <property type="match status" value="1"/>
</dbReference>
<dbReference type="PANTHER" id="PTHR33563">
    <property type="match status" value="1"/>
</dbReference>
<dbReference type="PANTHER" id="PTHR33563:SF1">
    <property type="entry name" value="3-DEHYDROQUINATE SYNTHASE"/>
    <property type="match status" value="1"/>
</dbReference>
<dbReference type="Pfam" id="PF01959">
    <property type="entry name" value="DHQS"/>
    <property type="match status" value="1"/>
</dbReference>
<dbReference type="PIRSF" id="PIRSF006655">
    <property type="entry name" value="DHQ_synth"/>
    <property type="match status" value="1"/>
</dbReference>
<organism>
    <name type="scientific">Haloquadratum walsbyi (strain DSM 16790 / HBSQ001)</name>
    <dbReference type="NCBI Taxonomy" id="362976"/>
    <lineage>
        <taxon>Archaea</taxon>
        <taxon>Methanobacteriati</taxon>
        <taxon>Methanobacteriota</taxon>
        <taxon>Stenosarchaea group</taxon>
        <taxon>Halobacteria</taxon>
        <taxon>Halobacteriales</taxon>
        <taxon>Haloferacaceae</taxon>
        <taxon>Haloquadratum</taxon>
    </lineage>
</organism>
<proteinExistence type="inferred from homology"/>
<sequence length="399" mass="43552">MTESRSHSRRVWIKADSDVGDWKTRKRRITTGLEAGVDCVLVDPEDISRVQSLGDVSIAAFTSTADSETDSSAETEGVEEADTVVIGKESESDGTDDFPETLSASADLSAIETHSNNTVVETGAYIRILSEEYEALAETAAADASYTIVIGEDWTIIPLENLIARIGSETTLIAGVTSAEEAQTAFETLEIGADGVLLDTDDPDEIRETVAVRDATERETLELEWATVIDIERAGMADRVCVDTANLMQHNEGMLIGSMSRGLIFVHAETAESPYIASRPFRVNAGAVHAYLRTPDGGTAYLSELQSGDTVQVVNTDGQTREAIVGRVKIEKRPMFRIELEYDDDRVETLLQNAETIKVNTQSGRTAVTDLESGDEIRLFYEETARHFGEAVEESIIEK</sequence>
<comment type="function">
    <text evidence="1">Catalyzes the oxidative deamination and cyclization of 2-amino-3,7-dideoxy-D-threo-hept-6-ulosonic acid (ADH) to yield 3-dehydroquinate (DHQ), which is fed into the canonical shikimic pathway of aromatic amino acid biosynthesis.</text>
</comment>
<comment type="catalytic activity">
    <reaction evidence="1">
        <text>2-amino-2,3,7-trideoxy-D-lyxo-hept-6-ulosonate + NAD(+) + H2O = 3-dehydroquinate + NH4(+) + NADH + H(+)</text>
        <dbReference type="Rhea" id="RHEA:25956"/>
        <dbReference type="ChEBI" id="CHEBI:15377"/>
        <dbReference type="ChEBI" id="CHEBI:15378"/>
        <dbReference type="ChEBI" id="CHEBI:28938"/>
        <dbReference type="ChEBI" id="CHEBI:32364"/>
        <dbReference type="ChEBI" id="CHEBI:57540"/>
        <dbReference type="ChEBI" id="CHEBI:57945"/>
        <dbReference type="ChEBI" id="CHEBI:58859"/>
        <dbReference type="EC" id="1.4.1.24"/>
    </reaction>
</comment>
<comment type="similarity">
    <text evidence="1">Belongs to the archaeal-type DHQ synthase family.</text>
</comment>
<accession>Q18DY6</accession>
<name>DHQS_HALWD</name>